<dbReference type="EC" id="3.1.26.5" evidence="1"/>
<dbReference type="EMBL" id="AE009442">
    <property type="protein sequence ID" value="AAO29941.1"/>
    <property type="molecule type" value="Genomic_DNA"/>
</dbReference>
<dbReference type="SMR" id="Q879S2"/>
<dbReference type="KEGG" id="xft:PD_2122"/>
<dbReference type="HOGENOM" id="CLU_117179_3_0_6"/>
<dbReference type="Proteomes" id="UP000002516">
    <property type="component" value="Chromosome"/>
</dbReference>
<dbReference type="GO" id="GO:0030677">
    <property type="term" value="C:ribonuclease P complex"/>
    <property type="evidence" value="ECO:0007669"/>
    <property type="project" value="TreeGrafter"/>
</dbReference>
<dbReference type="GO" id="GO:0042781">
    <property type="term" value="F:3'-tRNA processing endoribonuclease activity"/>
    <property type="evidence" value="ECO:0007669"/>
    <property type="project" value="TreeGrafter"/>
</dbReference>
<dbReference type="GO" id="GO:0004526">
    <property type="term" value="F:ribonuclease P activity"/>
    <property type="evidence" value="ECO:0007669"/>
    <property type="project" value="UniProtKB-UniRule"/>
</dbReference>
<dbReference type="GO" id="GO:0000049">
    <property type="term" value="F:tRNA binding"/>
    <property type="evidence" value="ECO:0007669"/>
    <property type="project" value="UniProtKB-UniRule"/>
</dbReference>
<dbReference type="GO" id="GO:0001682">
    <property type="term" value="P:tRNA 5'-leader removal"/>
    <property type="evidence" value="ECO:0007669"/>
    <property type="project" value="UniProtKB-UniRule"/>
</dbReference>
<dbReference type="Gene3D" id="3.30.230.10">
    <property type="match status" value="1"/>
</dbReference>
<dbReference type="HAMAP" id="MF_00227">
    <property type="entry name" value="RNase_P"/>
    <property type="match status" value="1"/>
</dbReference>
<dbReference type="InterPro" id="IPR020568">
    <property type="entry name" value="Ribosomal_Su5_D2-typ_SF"/>
</dbReference>
<dbReference type="InterPro" id="IPR014721">
    <property type="entry name" value="Ribsml_uS5_D2-typ_fold_subgr"/>
</dbReference>
<dbReference type="InterPro" id="IPR000100">
    <property type="entry name" value="RNase_P"/>
</dbReference>
<dbReference type="InterPro" id="IPR020539">
    <property type="entry name" value="RNase_P_CS"/>
</dbReference>
<dbReference type="NCBIfam" id="TIGR00188">
    <property type="entry name" value="rnpA"/>
    <property type="match status" value="1"/>
</dbReference>
<dbReference type="PANTHER" id="PTHR33992">
    <property type="entry name" value="RIBONUCLEASE P PROTEIN COMPONENT"/>
    <property type="match status" value="1"/>
</dbReference>
<dbReference type="PANTHER" id="PTHR33992:SF1">
    <property type="entry name" value="RIBONUCLEASE P PROTEIN COMPONENT"/>
    <property type="match status" value="1"/>
</dbReference>
<dbReference type="Pfam" id="PF00825">
    <property type="entry name" value="Ribonuclease_P"/>
    <property type="match status" value="1"/>
</dbReference>
<dbReference type="SUPFAM" id="SSF54211">
    <property type="entry name" value="Ribosomal protein S5 domain 2-like"/>
    <property type="match status" value="1"/>
</dbReference>
<dbReference type="PROSITE" id="PS00648">
    <property type="entry name" value="RIBONUCLEASE_P"/>
    <property type="match status" value="1"/>
</dbReference>
<accession>Q879S2</accession>
<sequence length="135" mass="15423">MNSCKRFPRSARICLPSEYYVAFEQGRRYSSVLLRLHHLPTSGPVRLGLVVSRRVDIRAVNRNRIKRALREVMRQIAYKLVPGDYVVVVRQTAKDVSNAELSVALLSLLRRIGALPLASIDNAMLPFFERNCSRK</sequence>
<keyword id="KW-0255">Endonuclease</keyword>
<keyword id="KW-0378">Hydrolase</keyword>
<keyword id="KW-0540">Nuclease</keyword>
<keyword id="KW-1185">Reference proteome</keyword>
<keyword id="KW-0694">RNA-binding</keyword>
<keyword id="KW-0819">tRNA processing</keyword>
<name>RNPA_XYLFT</name>
<reference key="1">
    <citation type="journal article" date="2003" name="J. Bacteriol.">
        <title>Comparative analyses of the complete genome sequences of Pierce's disease and citrus variegated chlorosis strains of Xylella fastidiosa.</title>
        <authorList>
            <person name="Van Sluys M.A."/>
            <person name="de Oliveira M.C."/>
            <person name="Monteiro-Vitorello C.B."/>
            <person name="Miyaki C.Y."/>
            <person name="Furlan L.R."/>
            <person name="Camargo L.E.A."/>
            <person name="da Silva A.C.R."/>
            <person name="Moon D.H."/>
            <person name="Takita M.A."/>
            <person name="Lemos E.G.M."/>
            <person name="Machado M.A."/>
            <person name="Ferro M.I.T."/>
            <person name="da Silva F.R."/>
            <person name="Goldman M.H.S."/>
            <person name="Goldman G.H."/>
            <person name="Lemos M.V.F."/>
            <person name="El-Dorry H."/>
            <person name="Tsai S.M."/>
            <person name="Carrer H."/>
            <person name="Carraro D.M."/>
            <person name="de Oliveira R.C."/>
            <person name="Nunes L.R."/>
            <person name="Siqueira W.J."/>
            <person name="Coutinho L.L."/>
            <person name="Kimura E.T."/>
            <person name="Ferro E.S."/>
            <person name="Harakava R."/>
            <person name="Kuramae E.E."/>
            <person name="Marino C.L."/>
            <person name="Giglioti E."/>
            <person name="Abreu I.L."/>
            <person name="Alves L.M.C."/>
            <person name="do Amaral A.M."/>
            <person name="Baia G.S."/>
            <person name="Blanco S.R."/>
            <person name="Brito M.S."/>
            <person name="Cannavan F.S."/>
            <person name="Celestino A.V."/>
            <person name="da Cunha A.F."/>
            <person name="Fenille R.C."/>
            <person name="Ferro J.A."/>
            <person name="Formighieri E.F."/>
            <person name="Kishi L.T."/>
            <person name="Leoni S.G."/>
            <person name="Oliveira A.R."/>
            <person name="Rosa V.E. Jr."/>
            <person name="Sassaki F.T."/>
            <person name="Sena J.A.D."/>
            <person name="de Souza A.A."/>
            <person name="Truffi D."/>
            <person name="Tsukumo F."/>
            <person name="Yanai G.M."/>
            <person name="Zaros L.G."/>
            <person name="Civerolo E.L."/>
            <person name="Simpson A.J.G."/>
            <person name="Almeida N.F. Jr."/>
            <person name="Setubal J.C."/>
            <person name="Kitajima J.P."/>
        </authorList>
    </citation>
    <scope>NUCLEOTIDE SEQUENCE [LARGE SCALE GENOMIC DNA]</scope>
    <source>
        <strain>Temecula1 / ATCC 700964</strain>
    </source>
</reference>
<proteinExistence type="inferred from homology"/>
<comment type="function">
    <text evidence="1">RNaseP catalyzes the removal of the 5'-leader sequence from pre-tRNA to produce the mature 5'-terminus. It can also cleave other RNA substrates such as 4.5S RNA. The protein component plays an auxiliary but essential role in vivo by binding to the 5'-leader sequence and broadening the substrate specificity of the ribozyme.</text>
</comment>
<comment type="catalytic activity">
    <reaction evidence="1">
        <text>Endonucleolytic cleavage of RNA, removing 5'-extranucleotides from tRNA precursor.</text>
        <dbReference type="EC" id="3.1.26.5"/>
    </reaction>
</comment>
<comment type="subunit">
    <text evidence="1">Consists of a catalytic RNA component (M1 or rnpB) and a protein subunit.</text>
</comment>
<comment type="similarity">
    <text evidence="1">Belongs to the RnpA family.</text>
</comment>
<evidence type="ECO:0000255" key="1">
    <source>
        <dbReference type="HAMAP-Rule" id="MF_00227"/>
    </source>
</evidence>
<organism>
    <name type="scientific">Xylella fastidiosa (strain Temecula1 / ATCC 700964)</name>
    <dbReference type="NCBI Taxonomy" id="183190"/>
    <lineage>
        <taxon>Bacteria</taxon>
        <taxon>Pseudomonadati</taxon>
        <taxon>Pseudomonadota</taxon>
        <taxon>Gammaproteobacteria</taxon>
        <taxon>Lysobacterales</taxon>
        <taxon>Lysobacteraceae</taxon>
        <taxon>Xylella</taxon>
    </lineage>
</organism>
<feature type="chain" id="PRO_0000198570" description="Ribonuclease P protein component">
    <location>
        <begin position="1"/>
        <end position="135"/>
    </location>
</feature>
<gene>
    <name evidence="1" type="primary">rnpA</name>
    <name type="ordered locus">PD_2122</name>
</gene>
<protein>
    <recommendedName>
        <fullName evidence="1">Ribonuclease P protein component</fullName>
        <shortName evidence="1">RNase P protein</shortName>
        <shortName evidence="1">RNaseP protein</shortName>
        <ecNumber evidence="1">3.1.26.5</ecNumber>
    </recommendedName>
    <alternativeName>
        <fullName evidence="1">Protein C5</fullName>
    </alternativeName>
</protein>